<accession>B6I3H6</accession>
<comment type="catalytic activity">
    <reaction evidence="1">
        <text>D-mannitol 1-phosphate + NAD(+) = beta-D-fructose 6-phosphate + NADH + H(+)</text>
        <dbReference type="Rhea" id="RHEA:19661"/>
        <dbReference type="ChEBI" id="CHEBI:15378"/>
        <dbReference type="ChEBI" id="CHEBI:57540"/>
        <dbReference type="ChEBI" id="CHEBI:57634"/>
        <dbReference type="ChEBI" id="CHEBI:57945"/>
        <dbReference type="ChEBI" id="CHEBI:61381"/>
        <dbReference type="EC" id="1.1.1.17"/>
    </reaction>
</comment>
<comment type="similarity">
    <text evidence="1">Belongs to the mannitol dehydrogenase family.</text>
</comment>
<keyword id="KW-0007">Acetylation</keyword>
<keyword id="KW-0520">NAD</keyword>
<keyword id="KW-0560">Oxidoreductase</keyword>
<reference key="1">
    <citation type="journal article" date="2008" name="DNA Res.">
        <title>Complete genome sequence and comparative analysis of the wild-type commensal Escherichia coli strain SE11 isolated from a healthy adult.</title>
        <authorList>
            <person name="Oshima K."/>
            <person name="Toh H."/>
            <person name="Ogura Y."/>
            <person name="Sasamoto H."/>
            <person name="Morita H."/>
            <person name="Park S.-H."/>
            <person name="Ooka T."/>
            <person name="Iyoda S."/>
            <person name="Taylor T.D."/>
            <person name="Hayashi T."/>
            <person name="Itoh K."/>
            <person name="Hattori M."/>
        </authorList>
    </citation>
    <scope>NUCLEOTIDE SEQUENCE [LARGE SCALE GENOMIC DNA]</scope>
    <source>
        <strain>SE11</strain>
    </source>
</reference>
<evidence type="ECO:0000255" key="1">
    <source>
        <dbReference type="HAMAP-Rule" id="MF_00196"/>
    </source>
</evidence>
<protein>
    <recommendedName>
        <fullName evidence="1">Mannitol-1-phosphate 5-dehydrogenase</fullName>
        <ecNumber evidence="1">1.1.1.17</ecNumber>
    </recommendedName>
</protein>
<feature type="chain" id="PRO_1000099191" description="Mannitol-1-phosphate 5-dehydrogenase">
    <location>
        <begin position="1"/>
        <end position="382"/>
    </location>
</feature>
<feature type="binding site" evidence="1">
    <location>
        <begin position="3"/>
        <end position="14"/>
    </location>
    <ligand>
        <name>NAD(+)</name>
        <dbReference type="ChEBI" id="CHEBI:57540"/>
    </ligand>
</feature>
<feature type="modified residue" description="N6-acetyllysine" evidence="1">
    <location>
        <position position="269"/>
    </location>
</feature>
<sequence length="382" mass="41139">MKALHFGAGNIGRGFIGKLLADAGIQLTFADVNQVVLDALNARHSYQVHVVGETEQVDTVSGVNAVSSIGDDVVDLIAQVDLVTTAVGPVVLERIAPAIAKGLVKRKEQGNESPLNIIACENMVRGTTQLKGHVMNALPEDAKAWVEEHVGFVDSAVDRIVPPSASATNDPLEVTVETFSEWIVDKTQFKGALPNIPGMELTDNLMAFVERKLFTLNTGHAITAYLGKLAGHQTIRDAILDEKIRAVVKGAMEESGAVLIKRYGFDADKHAAYIQKILGRFENPYLKDDVERVGRQPLRKLSAGDRLIKPLLGTLEYSLPHKNLIQGIAGAMHFRSEDDPQAQELAALIADKGPQAALAQISGLDANSEVVSEAVTAYKAMQ</sequence>
<proteinExistence type="inferred from homology"/>
<organism>
    <name type="scientific">Escherichia coli (strain SE11)</name>
    <dbReference type="NCBI Taxonomy" id="409438"/>
    <lineage>
        <taxon>Bacteria</taxon>
        <taxon>Pseudomonadati</taxon>
        <taxon>Pseudomonadota</taxon>
        <taxon>Gammaproteobacteria</taxon>
        <taxon>Enterobacterales</taxon>
        <taxon>Enterobacteriaceae</taxon>
        <taxon>Escherichia</taxon>
    </lineage>
</organism>
<gene>
    <name evidence="1" type="primary">mtlD</name>
    <name type="ordered locus">ECSE_3879</name>
</gene>
<dbReference type="EC" id="1.1.1.17" evidence="1"/>
<dbReference type="EMBL" id="AP009240">
    <property type="protein sequence ID" value="BAG79403.1"/>
    <property type="molecule type" value="Genomic_DNA"/>
</dbReference>
<dbReference type="RefSeq" id="WP_000645424.1">
    <property type="nucleotide sequence ID" value="NC_011415.1"/>
</dbReference>
<dbReference type="SMR" id="B6I3H6"/>
<dbReference type="KEGG" id="ecy:ECSE_3879"/>
<dbReference type="HOGENOM" id="CLU_036089_2_0_6"/>
<dbReference type="Proteomes" id="UP000008199">
    <property type="component" value="Chromosome"/>
</dbReference>
<dbReference type="GO" id="GO:0005829">
    <property type="term" value="C:cytosol"/>
    <property type="evidence" value="ECO:0007669"/>
    <property type="project" value="TreeGrafter"/>
</dbReference>
<dbReference type="GO" id="GO:0008926">
    <property type="term" value="F:mannitol-1-phosphate 5-dehydrogenase activity"/>
    <property type="evidence" value="ECO:0007669"/>
    <property type="project" value="UniProtKB-UniRule"/>
</dbReference>
<dbReference type="GO" id="GO:0019592">
    <property type="term" value="P:mannitol catabolic process"/>
    <property type="evidence" value="ECO:0007669"/>
    <property type="project" value="TreeGrafter"/>
</dbReference>
<dbReference type="FunFam" id="1.10.1040.10:FF:000009">
    <property type="entry name" value="Mannitol-1-phosphate 5-dehydrogenase"/>
    <property type="match status" value="1"/>
</dbReference>
<dbReference type="FunFam" id="3.40.50.720:FF:000075">
    <property type="entry name" value="Mannitol-1-phosphate 5-dehydrogenase"/>
    <property type="match status" value="1"/>
</dbReference>
<dbReference type="Gene3D" id="1.10.1040.10">
    <property type="entry name" value="N-(1-d-carboxylethyl)-l-norvaline Dehydrogenase, domain 2"/>
    <property type="match status" value="1"/>
</dbReference>
<dbReference type="Gene3D" id="3.40.50.720">
    <property type="entry name" value="NAD(P)-binding Rossmann-like Domain"/>
    <property type="match status" value="1"/>
</dbReference>
<dbReference type="HAMAP" id="MF_00196">
    <property type="entry name" value="Mannitol_dehydrog"/>
    <property type="match status" value="1"/>
</dbReference>
<dbReference type="InterPro" id="IPR008927">
    <property type="entry name" value="6-PGluconate_DH-like_C_sf"/>
</dbReference>
<dbReference type="InterPro" id="IPR013328">
    <property type="entry name" value="6PGD_dom2"/>
</dbReference>
<dbReference type="InterPro" id="IPR023028">
    <property type="entry name" value="Mannitol_1_phos_5_DH"/>
</dbReference>
<dbReference type="InterPro" id="IPR000669">
    <property type="entry name" value="Mannitol_DH"/>
</dbReference>
<dbReference type="InterPro" id="IPR013118">
    <property type="entry name" value="Mannitol_DH_C"/>
</dbReference>
<dbReference type="InterPro" id="IPR023027">
    <property type="entry name" value="Mannitol_DH_CS"/>
</dbReference>
<dbReference type="InterPro" id="IPR013131">
    <property type="entry name" value="Mannitol_DH_N"/>
</dbReference>
<dbReference type="InterPro" id="IPR036291">
    <property type="entry name" value="NAD(P)-bd_dom_sf"/>
</dbReference>
<dbReference type="NCBIfam" id="NF002646">
    <property type="entry name" value="PRK02318.1-2"/>
    <property type="match status" value="1"/>
</dbReference>
<dbReference type="NCBIfam" id="NF002647">
    <property type="entry name" value="PRK02318.1-3"/>
    <property type="match status" value="1"/>
</dbReference>
<dbReference type="NCBIfam" id="NF002648">
    <property type="entry name" value="PRK02318.1-4"/>
    <property type="match status" value="1"/>
</dbReference>
<dbReference type="NCBIfam" id="NF002650">
    <property type="entry name" value="PRK02318.2-2"/>
    <property type="match status" value="1"/>
</dbReference>
<dbReference type="NCBIfam" id="NF002652">
    <property type="entry name" value="PRK02318.2-5"/>
    <property type="match status" value="1"/>
</dbReference>
<dbReference type="PANTHER" id="PTHR30524:SF0">
    <property type="entry name" value="ALTRONATE OXIDOREDUCTASE-RELATED"/>
    <property type="match status" value="1"/>
</dbReference>
<dbReference type="PANTHER" id="PTHR30524">
    <property type="entry name" value="MANNITOL-1-PHOSPHATE 5-DEHYDROGENASE"/>
    <property type="match status" value="1"/>
</dbReference>
<dbReference type="Pfam" id="PF01232">
    <property type="entry name" value="Mannitol_dh"/>
    <property type="match status" value="1"/>
</dbReference>
<dbReference type="Pfam" id="PF08125">
    <property type="entry name" value="Mannitol_dh_C"/>
    <property type="match status" value="1"/>
</dbReference>
<dbReference type="PRINTS" id="PR00084">
    <property type="entry name" value="MTLDHDRGNASE"/>
</dbReference>
<dbReference type="SUPFAM" id="SSF48179">
    <property type="entry name" value="6-phosphogluconate dehydrogenase C-terminal domain-like"/>
    <property type="match status" value="1"/>
</dbReference>
<dbReference type="SUPFAM" id="SSF51735">
    <property type="entry name" value="NAD(P)-binding Rossmann-fold domains"/>
    <property type="match status" value="1"/>
</dbReference>
<dbReference type="PROSITE" id="PS00974">
    <property type="entry name" value="MANNITOL_DHGENASE"/>
    <property type="match status" value="1"/>
</dbReference>
<name>MTLD_ECOSE</name>